<protein>
    <recommendedName>
        <fullName evidence="1">Translation initiation factor IF-3</fullName>
    </recommendedName>
</protein>
<accession>Q9PL86</accession>
<name>IF3_CHLMU</name>
<dbReference type="EMBL" id="AE002160">
    <property type="protein sequence ID" value="AAF39093.1"/>
    <property type="molecule type" value="Genomic_DNA"/>
</dbReference>
<dbReference type="PIR" id="C81727">
    <property type="entry name" value="C81727"/>
</dbReference>
<dbReference type="RefSeq" id="WP_010229851.1">
    <property type="nucleotide sequence ID" value="NZ_CP063055.1"/>
</dbReference>
<dbReference type="SMR" id="Q9PL86"/>
<dbReference type="GeneID" id="1246348"/>
<dbReference type="KEGG" id="cmu:TC_0221"/>
<dbReference type="eggNOG" id="COG0290">
    <property type="taxonomic scope" value="Bacteria"/>
</dbReference>
<dbReference type="HOGENOM" id="CLU_054919_3_2_0"/>
<dbReference type="OrthoDB" id="9806014at2"/>
<dbReference type="Proteomes" id="UP000000800">
    <property type="component" value="Chromosome"/>
</dbReference>
<dbReference type="GO" id="GO:0005829">
    <property type="term" value="C:cytosol"/>
    <property type="evidence" value="ECO:0007669"/>
    <property type="project" value="TreeGrafter"/>
</dbReference>
<dbReference type="GO" id="GO:0016020">
    <property type="term" value="C:membrane"/>
    <property type="evidence" value="ECO:0007669"/>
    <property type="project" value="TreeGrafter"/>
</dbReference>
<dbReference type="GO" id="GO:0043022">
    <property type="term" value="F:ribosome binding"/>
    <property type="evidence" value="ECO:0007669"/>
    <property type="project" value="TreeGrafter"/>
</dbReference>
<dbReference type="GO" id="GO:0003743">
    <property type="term" value="F:translation initiation factor activity"/>
    <property type="evidence" value="ECO:0007669"/>
    <property type="project" value="UniProtKB-UniRule"/>
</dbReference>
<dbReference type="GO" id="GO:0032790">
    <property type="term" value="P:ribosome disassembly"/>
    <property type="evidence" value="ECO:0007669"/>
    <property type="project" value="TreeGrafter"/>
</dbReference>
<dbReference type="FunFam" id="3.10.20.80:FF:000001">
    <property type="entry name" value="Translation initiation factor IF-3"/>
    <property type="match status" value="1"/>
</dbReference>
<dbReference type="FunFam" id="3.30.110.10:FF:000001">
    <property type="entry name" value="Translation initiation factor IF-3"/>
    <property type="match status" value="1"/>
</dbReference>
<dbReference type="Gene3D" id="3.30.110.10">
    <property type="entry name" value="Translation initiation factor 3 (IF-3), C-terminal domain"/>
    <property type="match status" value="1"/>
</dbReference>
<dbReference type="Gene3D" id="3.10.20.80">
    <property type="entry name" value="Translation initiation factor 3 (IF-3), N-terminal domain"/>
    <property type="match status" value="1"/>
</dbReference>
<dbReference type="HAMAP" id="MF_00080">
    <property type="entry name" value="IF_3"/>
    <property type="match status" value="1"/>
</dbReference>
<dbReference type="InterPro" id="IPR036788">
    <property type="entry name" value="T_IF-3_C_sf"/>
</dbReference>
<dbReference type="InterPro" id="IPR036787">
    <property type="entry name" value="T_IF-3_N_sf"/>
</dbReference>
<dbReference type="InterPro" id="IPR019813">
    <property type="entry name" value="Translation_initiation_fac3_CS"/>
</dbReference>
<dbReference type="InterPro" id="IPR001288">
    <property type="entry name" value="Translation_initiation_fac_3"/>
</dbReference>
<dbReference type="InterPro" id="IPR019815">
    <property type="entry name" value="Translation_initiation_fac_3_C"/>
</dbReference>
<dbReference type="InterPro" id="IPR019814">
    <property type="entry name" value="Translation_initiation_fac_3_N"/>
</dbReference>
<dbReference type="NCBIfam" id="TIGR00168">
    <property type="entry name" value="infC"/>
    <property type="match status" value="1"/>
</dbReference>
<dbReference type="PANTHER" id="PTHR10938">
    <property type="entry name" value="TRANSLATION INITIATION FACTOR IF-3"/>
    <property type="match status" value="1"/>
</dbReference>
<dbReference type="PANTHER" id="PTHR10938:SF0">
    <property type="entry name" value="TRANSLATION INITIATION FACTOR IF-3, MITOCHONDRIAL"/>
    <property type="match status" value="1"/>
</dbReference>
<dbReference type="Pfam" id="PF00707">
    <property type="entry name" value="IF3_C"/>
    <property type="match status" value="1"/>
</dbReference>
<dbReference type="Pfam" id="PF05198">
    <property type="entry name" value="IF3_N"/>
    <property type="match status" value="1"/>
</dbReference>
<dbReference type="SUPFAM" id="SSF55200">
    <property type="entry name" value="Translation initiation factor IF3, C-terminal domain"/>
    <property type="match status" value="1"/>
</dbReference>
<dbReference type="SUPFAM" id="SSF54364">
    <property type="entry name" value="Translation initiation factor IF3, N-terminal domain"/>
    <property type="match status" value="1"/>
</dbReference>
<dbReference type="PROSITE" id="PS00938">
    <property type="entry name" value="IF3"/>
    <property type="match status" value="1"/>
</dbReference>
<keyword id="KW-0963">Cytoplasm</keyword>
<keyword id="KW-0396">Initiation factor</keyword>
<keyword id="KW-0648">Protein biosynthesis</keyword>
<proteinExistence type="inferred from homology"/>
<sequence>MALNLKINRQIRAPRVRVIGSSGEQLGILSIKEALDLAREADLDLVEVASNSEPPVCKIMDYGKYRYDVTKKEKDSKKAQHQVRVKEVKLKPNIDDNDFLTKVKQARAFIEKGNKVKVSCMFRGRELAYPEHGHKVVQRMCQGLEDVGFVESEPKLNGRSLICVIAPGTLKTKKKQEKVHAQDEKQ</sequence>
<evidence type="ECO:0000255" key="1">
    <source>
        <dbReference type="HAMAP-Rule" id="MF_00080"/>
    </source>
</evidence>
<organism>
    <name type="scientific">Chlamydia muridarum (strain MoPn / Nigg)</name>
    <dbReference type="NCBI Taxonomy" id="243161"/>
    <lineage>
        <taxon>Bacteria</taxon>
        <taxon>Pseudomonadati</taxon>
        <taxon>Chlamydiota</taxon>
        <taxon>Chlamydiia</taxon>
        <taxon>Chlamydiales</taxon>
        <taxon>Chlamydiaceae</taxon>
        <taxon>Chlamydia/Chlamydophila group</taxon>
        <taxon>Chlamydia</taxon>
    </lineage>
</organism>
<reference key="1">
    <citation type="journal article" date="2000" name="Nucleic Acids Res.">
        <title>Genome sequences of Chlamydia trachomatis MoPn and Chlamydia pneumoniae AR39.</title>
        <authorList>
            <person name="Read T.D."/>
            <person name="Brunham R.C."/>
            <person name="Shen C."/>
            <person name="Gill S.R."/>
            <person name="Heidelberg J.F."/>
            <person name="White O."/>
            <person name="Hickey E.K."/>
            <person name="Peterson J.D."/>
            <person name="Utterback T.R."/>
            <person name="Berry K.J."/>
            <person name="Bass S."/>
            <person name="Linher K.D."/>
            <person name="Weidman J.F."/>
            <person name="Khouri H.M."/>
            <person name="Craven B."/>
            <person name="Bowman C."/>
            <person name="Dodson R.J."/>
            <person name="Gwinn M.L."/>
            <person name="Nelson W.C."/>
            <person name="DeBoy R.T."/>
            <person name="Kolonay J.F."/>
            <person name="McClarty G."/>
            <person name="Salzberg S.L."/>
            <person name="Eisen J.A."/>
            <person name="Fraser C.M."/>
        </authorList>
    </citation>
    <scope>NUCLEOTIDE SEQUENCE [LARGE SCALE GENOMIC DNA]</scope>
    <source>
        <strain>MoPn / Nigg</strain>
    </source>
</reference>
<gene>
    <name evidence="1" type="primary">infC</name>
    <name type="ordered locus">TC_0221</name>
</gene>
<feature type="chain" id="PRO_0000177503" description="Translation initiation factor IF-3">
    <location>
        <begin position="1"/>
        <end position="186"/>
    </location>
</feature>
<comment type="function">
    <text evidence="1">IF-3 binds to the 30S ribosomal subunit and shifts the equilibrium between 70S ribosomes and their 50S and 30S subunits in favor of the free subunits, thus enhancing the availability of 30S subunits on which protein synthesis initiation begins.</text>
</comment>
<comment type="subunit">
    <text evidence="1">Monomer.</text>
</comment>
<comment type="subcellular location">
    <subcellularLocation>
        <location evidence="1">Cytoplasm</location>
    </subcellularLocation>
</comment>
<comment type="similarity">
    <text evidence="1">Belongs to the IF-3 family.</text>
</comment>